<reference evidence="6" key="1">
    <citation type="journal article" date="2007" name="Nature">
        <title>Evolution of genes and genomes on the Drosophila phylogeny.</title>
        <authorList>
            <consortium name="Drosophila 12 genomes consortium"/>
        </authorList>
    </citation>
    <scope>NUCLEOTIDE SEQUENCE [LARGE SCALE GENOMIC DNA]</scope>
    <source>
        <strain evidence="6">Rob3c / Tucson 14021-0248.25</strain>
    </source>
</reference>
<proteinExistence type="inferred from homology"/>
<evidence type="ECO:0000250" key="1"/>
<evidence type="ECO:0000250" key="2">
    <source>
        <dbReference type="UniProtKB" id="Q7K4M4"/>
    </source>
</evidence>
<evidence type="ECO:0000255" key="3">
    <source>
        <dbReference type="PROSITE-ProRule" id="PRU00042"/>
    </source>
</evidence>
<evidence type="ECO:0000256" key="4">
    <source>
        <dbReference type="SAM" id="MobiDB-lite"/>
    </source>
</evidence>
<evidence type="ECO:0000305" key="5"/>
<evidence type="ECO:0000312" key="6">
    <source>
        <dbReference type="EMBL" id="EDW48240.1"/>
    </source>
</evidence>
<name>TEF_DROSE</name>
<comment type="function">
    <text evidence="2">Specifically required in males for proper segregation of autosomal bivalents at meiosis I. Expression is required in the male germ line prior to spermatocyte stage S4. May have a role as a bridging molecule maintaining adhesion to hold autosome bivalents together via heterochromatic connections (By similarity).</text>
</comment>
<comment type="subcellular location">
    <subcellularLocation>
        <location evidence="2">Nucleus</location>
    </subcellularLocation>
    <subcellularLocation>
        <location evidence="1">Chromosome</location>
    </subcellularLocation>
    <text evidence="2">Male meiotic chromosomes.</text>
</comment>
<comment type="miscellaneous">
    <text evidence="2">Drosophilid specific gene duplication generates rgr and tef. Teflon has a function unique to Drosophilids.</text>
</comment>
<comment type="similarity">
    <text evidence="5">Belongs to the Teflon family.</text>
</comment>
<feature type="chain" id="PRO_0000377411" description="Protein teflon">
    <location>
        <begin position="1"/>
        <end position="656"/>
    </location>
</feature>
<feature type="zinc finger region" description="C2H2-type 1" evidence="3">
    <location>
        <begin position="33"/>
        <end position="56"/>
    </location>
</feature>
<feature type="zinc finger region" description="C2H2-type 2" evidence="3">
    <location>
        <begin position="606"/>
        <end position="628"/>
    </location>
</feature>
<feature type="zinc finger region" description="C2H2-type 3" evidence="3">
    <location>
        <begin position="632"/>
        <end position="655"/>
    </location>
</feature>
<feature type="region of interest" description="Disordered" evidence="4">
    <location>
        <begin position="80"/>
        <end position="131"/>
    </location>
</feature>
<feature type="compositionally biased region" description="Polar residues" evidence="4">
    <location>
        <begin position="89"/>
        <end position="104"/>
    </location>
</feature>
<keyword id="KW-0131">Cell cycle</keyword>
<keyword id="KW-0158">Chromosome</keyword>
<keyword id="KW-0159">Chromosome partition</keyword>
<keyword id="KW-0469">Meiosis</keyword>
<keyword id="KW-0479">Metal-binding</keyword>
<keyword id="KW-0539">Nucleus</keyword>
<keyword id="KW-1185">Reference proteome</keyword>
<keyword id="KW-0677">Repeat</keyword>
<keyword id="KW-0862">Zinc</keyword>
<keyword id="KW-0863">Zinc-finger</keyword>
<organism>
    <name type="scientific">Drosophila sechellia</name>
    <name type="common">Fruit fly</name>
    <dbReference type="NCBI Taxonomy" id="7238"/>
    <lineage>
        <taxon>Eukaryota</taxon>
        <taxon>Metazoa</taxon>
        <taxon>Ecdysozoa</taxon>
        <taxon>Arthropoda</taxon>
        <taxon>Hexapoda</taxon>
        <taxon>Insecta</taxon>
        <taxon>Pterygota</taxon>
        <taxon>Neoptera</taxon>
        <taxon>Endopterygota</taxon>
        <taxon>Diptera</taxon>
        <taxon>Brachycera</taxon>
        <taxon>Muscomorpha</taxon>
        <taxon>Ephydroidea</taxon>
        <taxon>Drosophilidae</taxon>
        <taxon>Drosophila</taxon>
        <taxon>Sophophora</taxon>
    </lineage>
</organism>
<sequence length="656" mass="74371">MSKFLDMLSGSQCVSLEKCGDVVVSTNDCMIALYCHFCRDLFTQLPEFLRHLQSNHSDVLHFTKEHNVYSVEELLSGEQDKAHEDAQSAGHNSSSGDSRSLMNSEDSRAIDGSEENSDNSPVKPEQIGKQNEINLLAEVTNILLQTNDKERINDELKPESGVFKGARKKANNESSSLKICDLKSHTIARTSRKRMSLVKNHILRVLDRDLSAKLEMKPLEPNSKLPITEPIQEDNIPGTCFQTPPKPIPSLSQLSVRKSSLTEANHICTKYATNKTAPTVPKLLNNVPKSILTSQQAQVNSDSSEINETYHISEAGSQVTKTTKSFPVKINQIEILQPLKLPKTLITPINEEGVSDQMENSTKNINNAQRKKENPKKFFKKPSELGIKTQGSPNKFLNIIKSKANPIIVNRVQTTSAKASTNKIQIRFNDKTKGFASEFNSTKIRKLKMENCVDLKTEDPCDNTNMRLNKMATIGSCEILKAVGLPAITDNAIEAIMLLPDELETMRKKADQFTKIYRKYDSIWNYRKIFPPAKPDFISQKIFALTREVNKTMLCNLANSDIKGIINQISVWHYNIYTQYIDLDTISEIARYTLKVFSFLPVSFAYFCKCCDDIFILKKEYLKHLISHQVRFQCTKCIKVFKYKGYYEKHLRNAHP</sequence>
<accession>B4HMH2</accession>
<protein>
    <recommendedName>
        <fullName evidence="2">Protein teflon</fullName>
    </recommendedName>
</protein>
<gene>
    <name evidence="2" type="primary">tef</name>
    <name type="ORF">GM20010</name>
</gene>
<dbReference type="EMBL" id="CH480816">
    <property type="protein sequence ID" value="EDW48240.1"/>
    <property type="molecule type" value="Genomic_DNA"/>
</dbReference>
<dbReference type="STRING" id="7238.B4HMH2"/>
<dbReference type="EnsemblMetazoa" id="FBtr0202995">
    <property type="protein sequence ID" value="FBpp0201487"/>
    <property type="gene ID" value="FBgn0174895"/>
</dbReference>
<dbReference type="EnsemblMetazoa" id="XM_002034191.2">
    <property type="protein sequence ID" value="XP_002034227.1"/>
    <property type="gene ID" value="LOC6609544"/>
</dbReference>
<dbReference type="GeneID" id="6609544"/>
<dbReference type="KEGG" id="dse:6609544"/>
<dbReference type="HOGENOM" id="CLU_014432_0_0_1"/>
<dbReference type="OMA" id="TKEHNVY"/>
<dbReference type="OrthoDB" id="67382at7215"/>
<dbReference type="PhylomeDB" id="B4HMH2"/>
<dbReference type="Proteomes" id="UP000001292">
    <property type="component" value="Unassembled WGS sequence"/>
</dbReference>
<dbReference type="GO" id="GO:0030849">
    <property type="term" value="C:autosome"/>
    <property type="evidence" value="ECO:0000250"/>
    <property type="project" value="UniProtKB"/>
</dbReference>
<dbReference type="GO" id="GO:0005634">
    <property type="term" value="C:nucleus"/>
    <property type="evidence" value="ECO:0007669"/>
    <property type="project" value="UniProtKB-SubCell"/>
</dbReference>
<dbReference type="GO" id="GO:0008270">
    <property type="term" value="F:zinc ion binding"/>
    <property type="evidence" value="ECO:0007669"/>
    <property type="project" value="UniProtKB-KW"/>
</dbReference>
<dbReference type="GO" id="GO:0051308">
    <property type="term" value="P:male meiosis chromosome separation"/>
    <property type="evidence" value="ECO:0000250"/>
    <property type="project" value="UniProtKB"/>
</dbReference>
<dbReference type="GO" id="GO:0007141">
    <property type="term" value="P:male meiosis I"/>
    <property type="evidence" value="ECO:0007669"/>
    <property type="project" value="EnsemblMetazoa"/>
</dbReference>
<dbReference type="InterPro" id="IPR013087">
    <property type="entry name" value="Znf_C2H2_type"/>
</dbReference>
<dbReference type="SMART" id="SM00355">
    <property type="entry name" value="ZnF_C2H2"/>
    <property type="match status" value="3"/>
</dbReference>
<dbReference type="PROSITE" id="PS00028">
    <property type="entry name" value="ZINC_FINGER_C2H2_1"/>
    <property type="match status" value="3"/>
</dbReference>
<dbReference type="PROSITE" id="PS50157">
    <property type="entry name" value="ZINC_FINGER_C2H2_2"/>
    <property type="match status" value="1"/>
</dbReference>